<sequence>MSERLRVQIPGLDLKNPIMPASGCFAFGIEYAELYDISKLGAIMIKAATKEARFGNPTPRVAETSSGMLNAIGLQNPGVDEIISNQLKKLEKYDVPIIANVAGSDIEDYVYVANKISKSPNVKALELNISCPNVKHGGIQFGTDPNVARNLTEKVKAVSSVPVYVKLSPNVTDIVAMAKAVETGGADGLTMINTLVGIVLDRKTGKPIIANTTGGLSGPAIRPVAIRMVYQVAQAVNIPIIGMGGVMDEWDVIDFISAGASAVAVGTANFTDPFVCPKIIDSLELALDKLGVNHILDLKGRAFR</sequence>
<keyword id="KW-0963">Cytoplasm</keyword>
<keyword id="KW-0285">Flavoprotein</keyword>
<keyword id="KW-0288">FMN</keyword>
<keyword id="KW-0520">NAD</keyword>
<keyword id="KW-0560">Oxidoreductase</keyword>
<keyword id="KW-0665">Pyrimidine biosynthesis</keyword>
<keyword id="KW-1185">Reference proteome</keyword>
<evidence type="ECO:0000250" key="1"/>
<evidence type="ECO:0000305" key="2"/>
<organism>
    <name type="scientific">Fusobacterium nucleatum subsp. nucleatum (strain ATCC 25586 / DSM 15643 / BCRC 10681 / CIP 101130 / JCM 8532 / KCTC 2640 / LMG 13131 / VPI 4355)</name>
    <dbReference type="NCBI Taxonomy" id="190304"/>
    <lineage>
        <taxon>Bacteria</taxon>
        <taxon>Fusobacteriati</taxon>
        <taxon>Fusobacteriota</taxon>
        <taxon>Fusobacteriia</taxon>
        <taxon>Fusobacteriales</taxon>
        <taxon>Fusobacteriaceae</taxon>
        <taxon>Fusobacterium</taxon>
    </lineage>
</organism>
<accession>Q8RG85</accession>
<reference key="1">
    <citation type="journal article" date="2002" name="J. Bacteriol.">
        <title>Genome sequence and analysis of the oral bacterium Fusobacterium nucleatum strain ATCC 25586.</title>
        <authorList>
            <person name="Kapatral V."/>
            <person name="Anderson I."/>
            <person name="Ivanova N."/>
            <person name="Reznik G."/>
            <person name="Los T."/>
            <person name="Lykidis A."/>
            <person name="Bhattacharyya A."/>
            <person name="Bartman A."/>
            <person name="Gardner W."/>
            <person name="Grechkin G."/>
            <person name="Zhu L."/>
            <person name="Vasieva O."/>
            <person name="Chu L."/>
            <person name="Kogan Y."/>
            <person name="Chaga O."/>
            <person name="Goltsman E."/>
            <person name="Bernal A."/>
            <person name="Larsen N."/>
            <person name="D'Souza M."/>
            <person name="Walunas T."/>
            <person name="Pusch G."/>
            <person name="Haselkorn R."/>
            <person name="Fonstein M."/>
            <person name="Kyrpides N.C."/>
            <person name="Overbeek R."/>
        </authorList>
    </citation>
    <scope>NUCLEOTIDE SEQUENCE [LARGE SCALE GENOMIC DNA]</scope>
    <source>
        <strain>ATCC 25586 / DSM 15643 / BCRC 10681 / CIP 101130 / JCM 8532 / KCTC 2640 / LMG 13131 / VPI 4355</strain>
    </source>
</reference>
<name>PYRDB_FUSNN</name>
<protein>
    <recommendedName>
        <fullName>Dihydroorotate dehydrogenase B (NAD(+)), catalytic subunit</fullName>
        <shortName>DHOD B</shortName>
        <shortName>DHODase B</shortName>
        <shortName>DHOdehase B</shortName>
        <ecNumber>1.3.1.14</ecNumber>
    </recommendedName>
    <alternativeName>
        <fullName>Dihydroorotate oxidase B</fullName>
    </alternativeName>
    <alternativeName>
        <fullName>Orotate reductase (NADH)</fullName>
    </alternativeName>
</protein>
<dbReference type="EC" id="1.3.1.14"/>
<dbReference type="EMBL" id="AE009951">
    <property type="protein sequence ID" value="AAL94627.1"/>
    <property type="molecule type" value="Genomic_DNA"/>
</dbReference>
<dbReference type="RefSeq" id="NP_603328.1">
    <property type="nucleotide sequence ID" value="NC_003454.1"/>
</dbReference>
<dbReference type="RefSeq" id="WP_011016381.1">
    <property type="nucleotide sequence ID" value="NZ_OZ209243.1"/>
</dbReference>
<dbReference type="SMR" id="Q8RG85"/>
<dbReference type="FunCoup" id="Q8RG85">
    <property type="interactions" value="376"/>
</dbReference>
<dbReference type="STRING" id="190304.FN0424"/>
<dbReference type="PaxDb" id="190304-FN0424"/>
<dbReference type="EnsemblBacteria" id="AAL94627">
    <property type="protein sequence ID" value="AAL94627"/>
    <property type="gene ID" value="FN0424"/>
</dbReference>
<dbReference type="KEGG" id="fnu:FN0424"/>
<dbReference type="PATRIC" id="fig|190304.8.peg.1001"/>
<dbReference type="eggNOG" id="COG0167">
    <property type="taxonomic scope" value="Bacteria"/>
</dbReference>
<dbReference type="HOGENOM" id="CLU_042042_0_0_0"/>
<dbReference type="InParanoid" id="Q8RG85"/>
<dbReference type="BioCyc" id="FNUC190304:G1FZS-1018-MONOMER"/>
<dbReference type="UniPathway" id="UPA00070">
    <property type="reaction ID" value="UER00945"/>
</dbReference>
<dbReference type="Proteomes" id="UP000002521">
    <property type="component" value="Chromosome"/>
</dbReference>
<dbReference type="GO" id="GO:0005737">
    <property type="term" value="C:cytoplasm"/>
    <property type="evidence" value="ECO:0000318"/>
    <property type="project" value="GO_Central"/>
</dbReference>
<dbReference type="GO" id="GO:0004589">
    <property type="term" value="F:dihydroorotate dehydrogenase (NAD+) activity"/>
    <property type="evidence" value="ECO:0007669"/>
    <property type="project" value="UniProtKB-EC"/>
</dbReference>
<dbReference type="GO" id="GO:0004152">
    <property type="term" value="F:dihydroorotate dehydrogenase activity"/>
    <property type="evidence" value="ECO:0000318"/>
    <property type="project" value="GO_Central"/>
</dbReference>
<dbReference type="GO" id="GO:0006207">
    <property type="term" value="P:'de novo' pyrimidine nucleobase biosynthetic process"/>
    <property type="evidence" value="ECO:0000318"/>
    <property type="project" value="GO_Central"/>
</dbReference>
<dbReference type="GO" id="GO:0044205">
    <property type="term" value="P:'de novo' UMP biosynthetic process"/>
    <property type="evidence" value="ECO:0007669"/>
    <property type="project" value="UniProtKB-UniRule"/>
</dbReference>
<dbReference type="CDD" id="cd04740">
    <property type="entry name" value="DHOD_1B_like"/>
    <property type="match status" value="1"/>
</dbReference>
<dbReference type="FunFam" id="3.20.20.70:FF:000069">
    <property type="entry name" value="Dihydroorotate dehydrogenase"/>
    <property type="match status" value="1"/>
</dbReference>
<dbReference type="Gene3D" id="3.20.20.70">
    <property type="entry name" value="Aldolase class I"/>
    <property type="match status" value="1"/>
</dbReference>
<dbReference type="HAMAP" id="MF_00224">
    <property type="entry name" value="DHO_dh_type1"/>
    <property type="match status" value="1"/>
</dbReference>
<dbReference type="InterPro" id="IPR013785">
    <property type="entry name" value="Aldolase_TIM"/>
</dbReference>
<dbReference type="InterPro" id="IPR050074">
    <property type="entry name" value="DHO_dehydrogenase"/>
</dbReference>
<dbReference type="InterPro" id="IPR033888">
    <property type="entry name" value="DHOD_1B"/>
</dbReference>
<dbReference type="InterPro" id="IPR024920">
    <property type="entry name" value="Dihydroorotate_DH_1"/>
</dbReference>
<dbReference type="InterPro" id="IPR012135">
    <property type="entry name" value="Dihydroorotate_DH_1_2"/>
</dbReference>
<dbReference type="InterPro" id="IPR005720">
    <property type="entry name" value="Dihydroorotate_DH_cat"/>
</dbReference>
<dbReference type="InterPro" id="IPR001295">
    <property type="entry name" value="Dihydroorotate_DH_CS"/>
</dbReference>
<dbReference type="InterPro" id="IPR049622">
    <property type="entry name" value="Dihydroorotate_DH_I"/>
</dbReference>
<dbReference type="NCBIfam" id="NF005574">
    <property type="entry name" value="PRK07259.1"/>
    <property type="match status" value="1"/>
</dbReference>
<dbReference type="NCBIfam" id="TIGR01037">
    <property type="entry name" value="pyrD_sub1_fam"/>
    <property type="match status" value="1"/>
</dbReference>
<dbReference type="PANTHER" id="PTHR48109:SF1">
    <property type="entry name" value="DIHYDROOROTATE DEHYDROGENASE (FUMARATE)"/>
    <property type="match status" value="1"/>
</dbReference>
<dbReference type="PANTHER" id="PTHR48109">
    <property type="entry name" value="DIHYDROOROTATE DEHYDROGENASE (QUINONE), MITOCHONDRIAL-RELATED"/>
    <property type="match status" value="1"/>
</dbReference>
<dbReference type="Pfam" id="PF01180">
    <property type="entry name" value="DHO_dh"/>
    <property type="match status" value="1"/>
</dbReference>
<dbReference type="PIRSF" id="PIRSF000164">
    <property type="entry name" value="DHO_oxidase"/>
    <property type="match status" value="1"/>
</dbReference>
<dbReference type="SUPFAM" id="SSF51395">
    <property type="entry name" value="FMN-linked oxidoreductases"/>
    <property type="match status" value="1"/>
</dbReference>
<dbReference type="PROSITE" id="PS00911">
    <property type="entry name" value="DHODEHASE_1"/>
    <property type="match status" value="1"/>
</dbReference>
<dbReference type="PROSITE" id="PS00912">
    <property type="entry name" value="DHODEHASE_2"/>
    <property type="match status" value="1"/>
</dbReference>
<comment type="function">
    <text evidence="1">Catalyzes the conversion of dihydroorotate to orotate with NAD(+) as electron acceptor.</text>
</comment>
<comment type="catalytic activity">
    <reaction>
        <text>(S)-dihydroorotate + NAD(+) = orotate + NADH + H(+)</text>
        <dbReference type="Rhea" id="RHEA:13513"/>
        <dbReference type="ChEBI" id="CHEBI:15378"/>
        <dbReference type="ChEBI" id="CHEBI:30839"/>
        <dbReference type="ChEBI" id="CHEBI:30864"/>
        <dbReference type="ChEBI" id="CHEBI:57540"/>
        <dbReference type="ChEBI" id="CHEBI:57945"/>
        <dbReference type="EC" id="1.3.1.14"/>
    </reaction>
</comment>
<comment type="cofactor">
    <cofactor evidence="1">
        <name>FMN</name>
        <dbReference type="ChEBI" id="CHEBI:58210"/>
    </cofactor>
    <text evidence="1">Binds 1 FMN per subunit.</text>
</comment>
<comment type="pathway">
    <text>Pyrimidine metabolism; UMP biosynthesis via de novo pathway; orotate from (S)-dihydroorotate (NAD(+) route): step 1/1.</text>
</comment>
<comment type="subunit">
    <text evidence="1">Heterotetramer of 2 PyrK and 2 PyrD type B subunits.</text>
</comment>
<comment type="subcellular location">
    <subcellularLocation>
        <location evidence="1">Cytoplasm</location>
    </subcellularLocation>
</comment>
<comment type="similarity">
    <text evidence="2">Belongs to the dihydroorotate dehydrogenase family. Type 1 subfamily.</text>
</comment>
<proteinExistence type="inferred from homology"/>
<gene>
    <name type="primary">pyrD</name>
    <name type="ordered locus">FN0424</name>
</gene>
<feature type="chain" id="PRO_0000148392" description="Dihydroorotate dehydrogenase B (NAD(+)), catalytic subunit">
    <location>
        <begin position="1"/>
        <end position="304"/>
    </location>
</feature>
<feature type="active site" description="Nucleophile">
    <location>
        <position position="131"/>
    </location>
</feature>
<feature type="binding site" evidence="1">
    <location>
        <position position="22"/>
    </location>
    <ligand>
        <name>FMN</name>
        <dbReference type="ChEBI" id="CHEBI:58210"/>
    </ligand>
</feature>
<feature type="binding site" evidence="1">
    <location>
        <begin position="46"/>
        <end position="47"/>
    </location>
    <ligand>
        <name>FMN</name>
        <dbReference type="ChEBI" id="CHEBI:58210"/>
    </ligand>
</feature>
<feature type="binding site" evidence="1">
    <location>
        <position position="46"/>
    </location>
    <ligand>
        <name>substrate</name>
    </ligand>
</feature>
<feature type="binding site" evidence="1">
    <location>
        <begin position="70"/>
        <end position="74"/>
    </location>
    <ligand>
        <name>substrate</name>
    </ligand>
</feature>
<feature type="binding site" evidence="1">
    <location>
        <position position="100"/>
    </location>
    <ligand>
        <name>FMN</name>
        <dbReference type="ChEBI" id="CHEBI:58210"/>
    </ligand>
</feature>
<feature type="binding site" evidence="1">
    <location>
        <position position="128"/>
    </location>
    <ligand>
        <name>FMN</name>
        <dbReference type="ChEBI" id="CHEBI:58210"/>
    </ligand>
</feature>
<feature type="binding site" evidence="1">
    <location>
        <position position="128"/>
    </location>
    <ligand>
        <name>substrate</name>
    </ligand>
</feature>
<feature type="binding site" evidence="1">
    <location>
        <position position="166"/>
    </location>
    <ligand>
        <name>FMN</name>
        <dbReference type="ChEBI" id="CHEBI:58210"/>
    </ligand>
</feature>
<feature type="binding site" evidence="1">
    <location>
        <position position="192"/>
    </location>
    <ligand>
        <name>FMN</name>
        <dbReference type="ChEBI" id="CHEBI:58210"/>
    </ligand>
</feature>
<feature type="binding site" evidence="1">
    <location>
        <begin position="193"/>
        <end position="194"/>
    </location>
    <ligand>
        <name>substrate</name>
    </ligand>
</feature>
<feature type="binding site" evidence="1">
    <location>
        <position position="218"/>
    </location>
    <ligand>
        <name>FMN</name>
        <dbReference type="ChEBI" id="CHEBI:58210"/>
    </ligand>
</feature>
<feature type="binding site" evidence="1">
    <location>
        <begin position="244"/>
        <end position="245"/>
    </location>
    <ligand>
        <name>FMN</name>
        <dbReference type="ChEBI" id="CHEBI:58210"/>
    </ligand>
</feature>
<feature type="binding site" evidence="1">
    <location>
        <begin position="266"/>
        <end position="267"/>
    </location>
    <ligand>
        <name>FMN</name>
        <dbReference type="ChEBI" id="CHEBI:58210"/>
    </ligand>
</feature>